<protein>
    <recommendedName>
        <fullName evidence="1">Cardiolipin synthase A</fullName>
        <shortName evidence="1">CL synthase</shortName>
        <ecNumber evidence="1">2.7.8.-</ecNumber>
    </recommendedName>
</protein>
<gene>
    <name evidence="1" type="primary">clsA</name>
    <name type="synonym">cls</name>
    <name type="ordered locus">PFLU_6096</name>
</gene>
<feature type="chain" id="PRO_1000203998" description="Cardiolipin synthase A">
    <location>
        <begin position="1"/>
        <end position="479"/>
    </location>
</feature>
<feature type="transmembrane region" description="Helical" evidence="1">
    <location>
        <begin position="8"/>
        <end position="28"/>
    </location>
</feature>
<feature type="transmembrane region" description="Helical" evidence="1">
    <location>
        <begin position="38"/>
        <end position="58"/>
    </location>
</feature>
<feature type="domain" description="PLD phosphodiesterase 1" evidence="1">
    <location>
        <begin position="218"/>
        <end position="245"/>
    </location>
</feature>
<feature type="domain" description="PLD phosphodiesterase 2" evidence="1">
    <location>
        <begin position="392"/>
        <end position="419"/>
    </location>
</feature>
<feature type="active site" evidence="1">
    <location>
        <position position="223"/>
    </location>
</feature>
<feature type="active site" evidence="1">
    <location>
        <position position="225"/>
    </location>
</feature>
<feature type="active site" evidence="1">
    <location>
        <position position="230"/>
    </location>
</feature>
<feature type="active site" evidence="1">
    <location>
        <position position="397"/>
    </location>
</feature>
<feature type="active site" evidence="1">
    <location>
        <position position="399"/>
    </location>
</feature>
<feature type="active site" evidence="1">
    <location>
        <position position="404"/>
    </location>
</feature>
<reference key="1">
    <citation type="journal article" date="2009" name="Genome Biol.">
        <title>Genomic and genetic analyses of diversity and plant interactions of Pseudomonas fluorescens.</title>
        <authorList>
            <person name="Silby M.W."/>
            <person name="Cerdeno-Tarraga A.M."/>
            <person name="Vernikos G.S."/>
            <person name="Giddens S.R."/>
            <person name="Jackson R.W."/>
            <person name="Preston G.M."/>
            <person name="Zhang X.-X."/>
            <person name="Moon C.D."/>
            <person name="Gehrig S.M."/>
            <person name="Godfrey S.A.C."/>
            <person name="Knight C.G."/>
            <person name="Malone J.G."/>
            <person name="Robinson Z."/>
            <person name="Spiers A.J."/>
            <person name="Harris S."/>
            <person name="Challis G.L."/>
            <person name="Yaxley A.M."/>
            <person name="Harris D."/>
            <person name="Seeger K."/>
            <person name="Murphy L."/>
            <person name="Rutter S."/>
            <person name="Squares R."/>
            <person name="Quail M.A."/>
            <person name="Saunders E."/>
            <person name="Mavromatis K."/>
            <person name="Brettin T.S."/>
            <person name="Bentley S.D."/>
            <person name="Hothersall J."/>
            <person name="Stephens E."/>
            <person name="Thomas C.M."/>
            <person name="Parkhill J."/>
            <person name="Levy S.B."/>
            <person name="Rainey P.B."/>
            <person name="Thomson N.R."/>
        </authorList>
    </citation>
    <scope>NUCLEOTIDE SEQUENCE [LARGE SCALE GENOMIC DNA]</scope>
    <source>
        <strain>SBW25</strain>
    </source>
</reference>
<proteinExistence type="inferred from homology"/>
<evidence type="ECO:0000255" key="1">
    <source>
        <dbReference type="HAMAP-Rule" id="MF_00190"/>
    </source>
</evidence>
<comment type="function">
    <text evidence="1">Catalyzes the reversible phosphatidyl group transfer from one phosphatidylglycerol molecule to another to form cardiolipin (CL) (diphosphatidylglycerol) and glycerol.</text>
</comment>
<comment type="catalytic activity">
    <reaction evidence="1">
        <text>2 a 1,2-diacyl-sn-glycero-3-phospho-(1'-sn-glycerol) = a cardiolipin + glycerol</text>
        <dbReference type="Rhea" id="RHEA:31451"/>
        <dbReference type="ChEBI" id="CHEBI:17754"/>
        <dbReference type="ChEBI" id="CHEBI:62237"/>
        <dbReference type="ChEBI" id="CHEBI:64716"/>
    </reaction>
</comment>
<comment type="subcellular location">
    <subcellularLocation>
        <location evidence="1">Cell inner membrane</location>
        <topology evidence="1">Multi-pass membrane protein</topology>
    </subcellularLocation>
</comment>
<comment type="similarity">
    <text evidence="1">Belongs to the phospholipase D family. Cardiolipin synthase subfamily. ClsA sub-subfamily.</text>
</comment>
<keyword id="KW-0997">Cell inner membrane</keyword>
<keyword id="KW-1003">Cell membrane</keyword>
<keyword id="KW-0444">Lipid biosynthesis</keyword>
<keyword id="KW-0443">Lipid metabolism</keyword>
<keyword id="KW-0472">Membrane</keyword>
<keyword id="KW-0594">Phospholipid biosynthesis</keyword>
<keyword id="KW-1208">Phospholipid metabolism</keyword>
<keyword id="KW-0677">Repeat</keyword>
<keyword id="KW-0808">Transferase</keyword>
<keyword id="KW-0812">Transmembrane</keyword>
<keyword id="KW-1133">Transmembrane helix</keyword>
<name>CLSA_PSEFS</name>
<organism>
    <name type="scientific">Pseudomonas fluorescens (strain SBW25)</name>
    <dbReference type="NCBI Taxonomy" id="216595"/>
    <lineage>
        <taxon>Bacteria</taxon>
        <taxon>Pseudomonadati</taxon>
        <taxon>Pseudomonadota</taxon>
        <taxon>Gammaproteobacteria</taxon>
        <taxon>Pseudomonadales</taxon>
        <taxon>Pseudomonadaceae</taxon>
        <taxon>Pseudomonas</taxon>
    </lineage>
</organism>
<dbReference type="EC" id="2.7.8.-" evidence="1"/>
<dbReference type="EMBL" id="AM181176">
    <property type="protein sequence ID" value="CAY53688.1"/>
    <property type="molecule type" value="Genomic_DNA"/>
</dbReference>
<dbReference type="RefSeq" id="WP_015886623.1">
    <property type="nucleotide sequence ID" value="NC_012660.1"/>
</dbReference>
<dbReference type="SMR" id="C3K1C4"/>
<dbReference type="STRING" id="294.SRM1_05812"/>
<dbReference type="GeneID" id="93467727"/>
<dbReference type="PATRIC" id="fig|216595.4.peg.6220"/>
<dbReference type="eggNOG" id="COG1502">
    <property type="taxonomic scope" value="Bacteria"/>
</dbReference>
<dbReference type="HOGENOM" id="CLU_038053_1_0_6"/>
<dbReference type="OrthoDB" id="9762009at2"/>
<dbReference type="GO" id="GO:0005886">
    <property type="term" value="C:plasma membrane"/>
    <property type="evidence" value="ECO:0007669"/>
    <property type="project" value="UniProtKB-SubCell"/>
</dbReference>
<dbReference type="GO" id="GO:0008808">
    <property type="term" value="F:cardiolipin synthase activity"/>
    <property type="evidence" value="ECO:0007669"/>
    <property type="project" value="InterPro"/>
</dbReference>
<dbReference type="GO" id="GO:0032049">
    <property type="term" value="P:cardiolipin biosynthetic process"/>
    <property type="evidence" value="ECO:0007669"/>
    <property type="project" value="InterPro"/>
</dbReference>
<dbReference type="CDD" id="cd09155">
    <property type="entry name" value="PLDc_PaCLS_like_1"/>
    <property type="match status" value="1"/>
</dbReference>
<dbReference type="FunFam" id="3.30.870.10:FF:000014">
    <property type="entry name" value="Cardiolipin synthase"/>
    <property type="match status" value="1"/>
</dbReference>
<dbReference type="FunFam" id="3.30.870.10:FF:000021">
    <property type="entry name" value="Cardiolipin synthase"/>
    <property type="match status" value="1"/>
</dbReference>
<dbReference type="Gene3D" id="3.30.870.10">
    <property type="entry name" value="Endonuclease Chain A"/>
    <property type="match status" value="2"/>
</dbReference>
<dbReference type="HAMAP" id="MF_00190">
    <property type="entry name" value="Cardiolipin_synth_ClsA"/>
    <property type="match status" value="1"/>
</dbReference>
<dbReference type="InterPro" id="IPR022924">
    <property type="entry name" value="Cardiolipin_synthase"/>
</dbReference>
<dbReference type="InterPro" id="IPR030840">
    <property type="entry name" value="CL_synthase_A"/>
</dbReference>
<dbReference type="InterPro" id="IPR027379">
    <property type="entry name" value="CLS_N"/>
</dbReference>
<dbReference type="InterPro" id="IPR025202">
    <property type="entry name" value="PLD-like_dom"/>
</dbReference>
<dbReference type="InterPro" id="IPR001736">
    <property type="entry name" value="PLipase_D/transphosphatidylase"/>
</dbReference>
<dbReference type="NCBIfam" id="TIGR04265">
    <property type="entry name" value="bac_cardiolipin"/>
    <property type="match status" value="1"/>
</dbReference>
<dbReference type="PANTHER" id="PTHR21248">
    <property type="entry name" value="CARDIOLIPIN SYNTHASE"/>
    <property type="match status" value="1"/>
</dbReference>
<dbReference type="PANTHER" id="PTHR21248:SF22">
    <property type="entry name" value="PHOSPHOLIPASE D"/>
    <property type="match status" value="1"/>
</dbReference>
<dbReference type="Pfam" id="PF13091">
    <property type="entry name" value="PLDc_2"/>
    <property type="match status" value="2"/>
</dbReference>
<dbReference type="Pfam" id="PF13396">
    <property type="entry name" value="PLDc_N"/>
    <property type="match status" value="1"/>
</dbReference>
<dbReference type="SMART" id="SM00155">
    <property type="entry name" value="PLDc"/>
    <property type="match status" value="2"/>
</dbReference>
<dbReference type="SUPFAM" id="SSF56024">
    <property type="entry name" value="Phospholipase D/nuclease"/>
    <property type="match status" value="2"/>
</dbReference>
<dbReference type="PROSITE" id="PS50035">
    <property type="entry name" value="PLD"/>
    <property type="match status" value="2"/>
</dbReference>
<sequence>MDFFGPHLLAYFIATLHFLGTLAAIHAVLTVRTAQGSIAWALSLMFMPYLTLIPYLIFGRSTFDAYIQARRQANQEMHTAITALNWRPWVEEALAARNSSAYASLRAMPKLGRMPCLANNEVHLLINGDATFSAIFEAIRNARTAVLFQFFIIHDDELGRQLHALLKEKSAEGVAIYVLYDRIGSHALPHRYVQSLRDAGVQVKAFATRSGWLNRFQVNFRNHRKIVVVDGITGFVGGHNVGDEYLGKKPPLAPWRDTHVQVTGPVVACLQESFAEDWFWAARELPPLILPDAYPEDGVLCQLLASGPADPYETCSLFFVEAIHAATERVWITSPYFIPDEAVFAALRLAVLRGVDVRLLLPSRPDHRIVYAASSLYAIEAVRAGVRVFRYTPGFLHQKVVLVDSEISAIGSANMDNRSFRLNFEVMLLTVDEAFAKEVEHMLLDDFALAHEVSQEESRETRRLQQLGMRVARLISPIL</sequence>
<accession>C3K1C4</accession>